<gene>
    <name type="primary">Dok6</name>
</gene>
<keyword id="KW-0597">Phosphoprotein</keyword>
<keyword id="KW-1185">Reference proteome</keyword>
<organism>
    <name type="scientific">Mus musculus</name>
    <name type="common">Mouse</name>
    <dbReference type="NCBI Taxonomy" id="10090"/>
    <lineage>
        <taxon>Eukaryota</taxon>
        <taxon>Metazoa</taxon>
        <taxon>Chordata</taxon>
        <taxon>Craniata</taxon>
        <taxon>Vertebrata</taxon>
        <taxon>Euteleostomi</taxon>
        <taxon>Mammalia</taxon>
        <taxon>Eutheria</taxon>
        <taxon>Euarchontoglires</taxon>
        <taxon>Glires</taxon>
        <taxon>Rodentia</taxon>
        <taxon>Myomorpha</taxon>
        <taxon>Muroidea</taxon>
        <taxon>Muridae</taxon>
        <taxon>Murinae</taxon>
        <taxon>Mus</taxon>
        <taxon>Mus</taxon>
    </lineage>
</organism>
<name>DOK6_MOUSE</name>
<proteinExistence type="evidence at protein level"/>
<sequence>MASNFNDIVKQGYVKIRSRKLGIFRRCWLVFKKASSKGPRRLEKFPDEKAAYFRNFHKVTELHNIKNITRLPRETKKHAVAIIFHDETSKTFACESELEAEEWCKHLCMECLGTRLNDISLGEPDLLAAGVQREQNERFNVYLMPTPNLDIYGECTMQITHENIYLWDIHNAKVKLVMWPLSSLRRYGRDSTWFTFESGRMCDTGEGLFTFQTREGEMIYQKVHSATLAIAEQHERLMLEMEQKARLQTSLTEPMTLSKSISLPRSAYWHHITRQNSVGEIYSLQGHGFGSSKMSRAQTFPSYAPEQSEEAQPPLSRSSSYGFSYSSSLIQ</sequence>
<reference key="1">
    <citation type="submission" date="2005-07" db="EMBL/GenBank/DDBJ databases">
        <title>Roles of Dok family proteins in neuromuscular synaptogenesis.</title>
        <authorList>
            <person name="Okada K."/>
            <person name="Higuchi O."/>
            <person name="Yamanashi Y."/>
        </authorList>
    </citation>
    <scope>NUCLEOTIDE SEQUENCE [MRNA]</scope>
</reference>
<reference key="2">
    <citation type="journal article" date="2004" name="Genome Res.">
        <title>The status, quality, and expansion of the NIH full-length cDNA project: the Mammalian Gene Collection (MGC).</title>
        <authorList>
            <consortium name="The MGC Project Team"/>
        </authorList>
    </citation>
    <scope>NUCLEOTIDE SEQUENCE [LARGE SCALE MRNA]</scope>
    <source>
        <tissue>Brain</tissue>
    </source>
</reference>
<accession>Q2MHE5</accession>
<accession>B2RSP9</accession>
<feature type="chain" id="PRO_0000322637" description="Docking protein 6">
    <location>
        <begin position="1"/>
        <end position="331"/>
    </location>
</feature>
<feature type="domain" description="PH">
    <location>
        <begin position="8"/>
        <end position="112"/>
    </location>
</feature>
<feature type="domain" description="IRS-type PTB" evidence="2">
    <location>
        <begin position="132"/>
        <end position="237"/>
    </location>
</feature>
<feature type="region of interest" description="Disordered" evidence="3">
    <location>
        <begin position="293"/>
        <end position="331"/>
    </location>
</feature>
<feature type="short sequence motif" description="DKFBH motif">
    <location>
        <begin position="263"/>
        <end position="273"/>
    </location>
</feature>
<feature type="compositionally biased region" description="Low complexity" evidence="3">
    <location>
        <begin position="316"/>
        <end position="331"/>
    </location>
</feature>
<protein>
    <recommendedName>
        <fullName>Docking protein 6</fullName>
    </recommendedName>
    <alternativeName>
        <fullName>Downstream of tyrosine kinase 6</fullName>
    </alternativeName>
</protein>
<evidence type="ECO:0000250" key="1"/>
<evidence type="ECO:0000255" key="2">
    <source>
        <dbReference type="PROSITE-ProRule" id="PRU00389"/>
    </source>
</evidence>
<evidence type="ECO:0000256" key="3">
    <source>
        <dbReference type="SAM" id="MobiDB-lite"/>
    </source>
</evidence>
<evidence type="ECO:0000305" key="4"/>
<comment type="function">
    <text evidence="1">DOK proteins are enzymatically inert adaptor or scaffolding proteins. They provide a docking platform for the assembly of multimolecular signaling complexes. DOK6 promotes Ret-mediated neurite growth. May have a role in brain development and/or maintenance (By similarity).</text>
</comment>
<comment type="subunit">
    <text evidence="1">Interacts via its PTB domain with phosphorylated RET.</text>
</comment>
<comment type="interaction">
    <interactant intactId="EBI-20585476">
        <id>Q2MHE5</id>
    </interactant>
    <interactant intactId="EBI-16744951">
        <id>Q6VNS1</id>
        <label>Ntrk3</label>
    </interactant>
    <organismsDiffer>false</organismsDiffer>
    <experiments>3</experiments>
</comment>
<comment type="domain">
    <text evidence="1">PTB domain mediates receptor interaction.</text>
</comment>
<comment type="PTM">
    <text evidence="1">On Ret activation, phosphorylated on one or more C-terminal tyrosine residues by an Src family kinase.</text>
</comment>
<comment type="similarity">
    <text evidence="4">Belongs to the DOK family. Type B subfamily.</text>
</comment>
<dbReference type="EMBL" id="AB221044">
    <property type="protein sequence ID" value="BAE75920.1"/>
    <property type="molecule type" value="mRNA"/>
</dbReference>
<dbReference type="EMBL" id="BC138955">
    <property type="protein sequence ID" value="AAI38956.1"/>
    <property type="molecule type" value="mRNA"/>
</dbReference>
<dbReference type="EMBL" id="BC138957">
    <property type="protein sequence ID" value="AAI38958.1"/>
    <property type="molecule type" value="mRNA"/>
</dbReference>
<dbReference type="CCDS" id="CCDS37878.1"/>
<dbReference type="RefSeq" id="NP_001034262.1">
    <property type="nucleotide sequence ID" value="NM_001039173.2"/>
</dbReference>
<dbReference type="SMR" id="Q2MHE5"/>
<dbReference type="BioGRID" id="549975">
    <property type="interactions" value="1"/>
</dbReference>
<dbReference type="FunCoup" id="Q2MHE5">
    <property type="interactions" value="505"/>
</dbReference>
<dbReference type="IntAct" id="Q2MHE5">
    <property type="interactions" value="2"/>
</dbReference>
<dbReference type="STRING" id="10090.ENSMUSP00000095103"/>
<dbReference type="iPTMnet" id="Q2MHE5"/>
<dbReference type="PhosphoSitePlus" id="Q2MHE5"/>
<dbReference type="PaxDb" id="10090-ENSMUSP00000095103"/>
<dbReference type="ProteomicsDB" id="277371"/>
<dbReference type="Antibodypedia" id="23216">
    <property type="antibodies" value="169 antibodies from 26 providers"/>
</dbReference>
<dbReference type="Ensembl" id="ENSMUST00000097495.5">
    <property type="protein sequence ID" value="ENSMUSP00000095103.4"/>
    <property type="gene ID" value="ENSMUSG00000073514.5"/>
</dbReference>
<dbReference type="GeneID" id="623279"/>
<dbReference type="KEGG" id="mmu:623279"/>
<dbReference type="UCSC" id="uc008fvr.1">
    <property type="organism name" value="mouse"/>
</dbReference>
<dbReference type="AGR" id="MGI:3639495"/>
<dbReference type="CTD" id="220164"/>
<dbReference type="MGI" id="MGI:3639495">
    <property type="gene designation" value="Dok6"/>
</dbReference>
<dbReference type="VEuPathDB" id="HostDB:ENSMUSG00000073514"/>
<dbReference type="eggNOG" id="KOG4047">
    <property type="taxonomic scope" value="Eukaryota"/>
</dbReference>
<dbReference type="GeneTree" id="ENSGT00940000158760"/>
<dbReference type="HOGENOM" id="CLU_057256_0_0_1"/>
<dbReference type="InParanoid" id="Q2MHE5"/>
<dbReference type="OMA" id="FQIFRRC"/>
<dbReference type="OrthoDB" id="6279276at2759"/>
<dbReference type="PhylomeDB" id="Q2MHE5"/>
<dbReference type="TreeFam" id="TF324994"/>
<dbReference type="Reactome" id="R-MMU-8853659">
    <property type="pathway name" value="RET signaling"/>
</dbReference>
<dbReference type="BioGRID-ORCS" id="623279">
    <property type="hits" value="3 hits in 76 CRISPR screens"/>
</dbReference>
<dbReference type="ChiTaRS" id="Dok6">
    <property type="organism name" value="mouse"/>
</dbReference>
<dbReference type="PRO" id="PR:Q2MHE5"/>
<dbReference type="Proteomes" id="UP000000589">
    <property type="component" value="Chromosome 18"/>
</dbReference>
<dbReference type="RNAct" id="Q2MHE5">
    <property type="molecule type" value="protein"/>
</dbReference>
<dbReference type="Bgee" id="ENSMUSG00000073514">
    <property type="expression patterns" value="Expressed in dentate gyrus of hippocampal formation granule cell and 24 other cell types or tissues"/>
</dbReference>
<dbReference type="CDD" id="cd14678">
    <property type="entry name" value="PH_DOK4_DOK5_DOK6"/>
    <property type="match status" value="1"/>
</dbReference>
<dbReference type="CDD" id="cd13164">
    <property type="entry name" value="PTB_DOK4_DOK5_DOK6"/>
    <property type="match status" value="1"/>
</dbReference>
<dbReference type="FunFam" id="2.30.29.30:FF:000110">
    <property type="entry name" value="Docking protein 4"/>
    <property type="match status" value="1"/>
</dbReference>
<dbReference type="FunFam" id="2.30.29.30:FF:000082">
    <property type="entry name" value="Docking protein 5"/>
    <property type="match status" value="1"/>
</dbReference>
<dbReference type="Gene3D" id="2.30.29.30">
    <property type="entry name" value="Pleckstrin-homology domain (PH domain)/Phosphotyrosine-binding domain (PTB)"/>
    <property type="match status" value="2"/>
</dbReference>
<dbReference type="InterPro" id="IPR050996">
    <property type="entry name" value="Docking_Protein_DOK"/>
</dbReference>
<dbReference type="InterPro" id="IPR037816">
    <property type="entry name" value="DOK4/5/6_PH"/>
</dbReference>
<dbReference type="InterPro" id="IPR002404">
    <property type="entry name" value="IRS_PTB"/>
</dbReference>
<dbReference type="InterPro" id="IPR011993">
    <property type="entry name" value="PH-like_dom_sf"/>
</dbReference>
<dbReference type="InterPro" id="IPR001849">
    <property type="entry name" value="PH_domain"/>
</dbReference>
<dbReference type="PANTHER" id="PTHR21258:SF43">
    <property type="entry name" value="DOCKING PROTEIN 6"/>
    <property type="match status" value="1"/>
</dbReference>
<dbReference type="PANTHER" id="PTHR21258">
    <property type="entry name" value="DOCKING PROTEIN RELATED"/>
    <property type="match status" value="1"/>
</dbReference>
<dbReference type="Pfam" id="PF02174">
    <property type="entry name" value="IRS"/>
    <property type="match status" value="1"/>
</dbReference>
<dbReference type="Pfam" id="PF00169">
    <property type="entry name" value="PH"/>
    <property type="match status" value="1"/>
</dbReference>
<dbReference type="SMART" id="SM01244">
    <property type="entry name" value="IRS"/>
    <property type="match status" value="1"/>
</dbReference>
<dbReference type="SMART" id="SM00233">
    <property type="entry name" value="PH"/>
    <property type="match status" value="1"/>
</dbReference>
<dbReference type="SMART" id="SM00310">
    <property type="entry name" value="PTBI"/>
    <property type="match status" value="1"/>
</dbReference>
<dbReference type="SUPFAM" id="SSF50729">
    <property type="entry name" value="PH domain-like"/>
    <property type="match status" value="2"/>
</dbReference>
<dbReference type="PROSITE" id="PS51064">
    <property type="entry name" value="IRS_PTB"/>
    <property type="match status" value="1"/>
</dbReference>